<keyword id="KW-0143">Chaperone</keyword>
<keyword id="KW-0472">Membrane</keyword>
<keyword id="KW-0496">Mitochondrion</keyword>
<keyword id="KW-1185">Reference proteome</keyword>
<keyword id="KW-0812">Transmembrane</keyword>
<keyword id="KW-1133">Transmembrane helix</keyword>
<organism>
    <name type="scientific">Eremothecium gossypii (strain ATCC 10895 / CBS 109.51 / FGSC 9923 / NRRL Y-1056)</name>
    <name type="common">Yeast</name>
    <name type="synonym">Ashbya gossypii</name>
    <dbReference type="NCBI Taxonomy" id="284811"/>
    <lineage>
        <taxon>Eukaryota</taxon>
        <taxon>Fungi</taxon>
        <taxon>Dikarya</taxon>
        <taxon>Ascomycota</taxon>
        <taxon>Saccharomycotina</taxon>
        <taxon>Saccharomycetes</taxon>
        <taxon>Saccharomycetales</taxon>
        <taxon>Saccharomycetaceae</taxon>
        <taxon>Eremothecium</taxon>
    </lineage>
</organism>
<reference key="1">
    <citation type="journal article" date="2004" name="Science">
        <title>The Ashbya gossypii genome as a tool for mapping the ancient Saccharomyces cerevisiae genome.</title>
        <authorList>
            <person name="Dietrich F.S."/>
            <person name="Voegeli S."/>
            <person name="Brachat S."/>
            <person name="Lerch A."/>
            <person name="Gates K."/>
            <person name="Steiner S."/>
            <person name="Mohr C."/>
            <person name="Poehlmann R."/>
            <person name="Luedi P."/>
            <person name="Choi S."/>
            <person name="Wing R.A."/>
            <person name="Flavier A."/>
            <person name="Gaffney T.D."/>
            <person name="Philippsen P."/>
        </authorList>
    </citation>
    <scope>NUCLEOTIDE SEQUENCE [LARGE SCALE GENOMIC DNA]</scope>
    <source>
        <strain>ATCC 10895 / CBS 109.51 / FGSC 9923 / NRRL Y-1056</strain>
    </source>
</reference>
<reference key="2">
    <citation type="journal article" date="2013" name="G3 (Bethesda)">
        <title>Genomes of Ashbya fungi isolated from insects reveal four mating-type loci, numerous translocations, lack of transposons, and distinct gene duplications.</title>
        <authorList>
            <person name="Dietrich F.S."/>
            <person name="Voegeli S."/>
            <person name="Kuo S."/>
            <person name="Philippsen P."/>
        </authorList>
    </citation>
    <scope>GENOME REANNOTATION</scope>
    <source>
        <strain>ATCC 10895 / CBS 109.51 / FGSC 9923 / NRRL Y-1056</strain>
    </source>
</reference>
<protein>
    <recommendedName>
        <fullName>J domain-containing protein 1</fullName>
    </recommendedName>
</protein>
<evidence type="ECO:0000250" key="1"/>
<evidence type="ECO:0000255" key="2"/>
<evidence type="ECO:0000255" key="3">
    <source>
        <dbReference type="PROSITE-ProRule" id="PRU00286"/>
    </source>
</evidence>
<evidence type="ECO:0000305" key="4"/>
<accession>Q75BG6</accession>
<sequence length="305" mass="34206">MAKRANWSLDGQQSSGGGAASWICACTDKISIAKALTRSLSVMLSRPTALLRTGARWRVSLTASGRSTVRCASTVAGWQGGLSWPQGKQPTPYEVLGLVKTGVDARQLKKRYHELAKLYHPDTAGAAQQGLGEHERLRRFKLVNEAYALLSDASRRRMYDMYATGWAHGPAPMAPAMAHGAYHERYAYYNAGTWEDMQDLNSDRQQVQFSAWGMVVWALCMLAGFQVMAFLIRLEERTSKSAHTHEEAEHALLLAHLNYGLDQDRVSRVRRFLWFRSWGLYRTKAELDEAARTNEALVRQLEGGK</sequence>
<gene>
    <name type="primary">JID1</name>
    <name type="ordered locus">ADL327W</name>
</gene>
<feature type="chain" id="PRO_0000240377" description="J domain-containing protein 1">
    <location>
        <begin position="1"/>
        <end position="305"/>
    </location>
</feature>
<feature type="transmembrane region" description="Helical" evidence="2">
    <location>
        <begin position="212"/>
        <end position="232"/>
    </location>
</feature>
<feature type="domain" description="J" evidence="3">
    <location>
        <begin position="91"/>
        <end position="163"/>
    </location>
</feature>
<comment type="function">
    <text evidence="1">Probable chaperone.</text>
</comment>
<comment type="subcellular location">
    <subcellularLocation>
        <location evidence="1">Mitochondrion membrane</location>
        <topology evidence="1">Single-pass membrane protein</topology>
    </subcellularLocation>
</comment>
<comment type="similarity">
    <text evidence="4">Belongs to the DnaJ family.</text>
</comment>
<name>JID1_EREGS</name>
<proteinExistence type="inferred from homology"/>
<dbReference type="EMBL" id="AE016817">
    <property type="protein sequence ID" value="AAS51593.1"/>
    <property type="molecule type" value="Genomic_DNA"/>
</dbReference>
<dbReference type="RefSeq" id="NP_983769.1">
    <property type="nucleotide sequence ID" value="NM_209122.1"/>
</dbReference>
<dbReference type="SMR" id="Q75BG6"/>
<dbReference type="FunCoup" id="Q75BG6">
    <property type="interactions" value="29"/>
</dbReference>
<dbReference type="STRING" id="284811.Q75BG6"/>
<dbReference type="EnsemblFungi" id="AAS51593">
    <property type="protein sequence ID" value="AAS51593"/>
    <property type="gene ID" value="AGOS_ADL327W"/>
</dbReference>
<dbReference type="GeneID" id="4619904"/>
<dbReference type="KEGG" id="ago:AGOS_ADL327W"/>
<dbReference type="eggNOG" id="ENOG502RYTK">
    <property type="taxonomic scope" value="Eukaryota"/>
</dbReference>
<dbReference type="HOGENOM" id="CLU_074165_0_0_1"/>
<dbReference type="InParanoid" id="Q75BG6"/>
<dbReference type="OMA" id="NAGTWED"/>
<dbReference type="OrthoDB" id="445556at2759"/>
<dbReference type="Proteomes" id="UP000000591">
    <property type="component" value="Chromosome IV"/>
</dbReference>
<dbReference type="GO" id="GO:0031966">
    <property type="term" value="C:mitochondrial membrane"/>
    <property type="evidence" value="ECO:0007669"/>
    <property type="project" value="UniProtKB-SubCell"/>
</dbReference>
<dbReference type="CDD" id="cd06257">
    <property type="entry name" value="DnaJ"/>
    <property type="match status" value="1"/>
</dbReference>
<dbReference type="FunFam" id="1.10.287.110:FF:000129">
    <property type="entry name" value="J domain-containing protein 1"/>
    <property type="match status" value="1"/>
</dbReference>
<dbReference type="Gene3D" id="1.10.287.110">
    <property type="entry name" value="DnaJ domain"/>
    <property type="match status" value="1"/>
</dbReference>
<dbReference type="InterPro" id="IPR050817">
    <property type="entry name" value="DjlA_DnaK_co-chaperone"/>
</dbReference>
<dbReference type="InterPro" id="IPR001623">
    <property type="entry name" value="DnaJ_domain"/>
</dbReference>
<dbReference type="InterPro" id="IPR018253">
    <property type="entry name" value="DnaJ_domain_CS"/>
</dbReference>
<dbReference type="InterPro" id="IPR036869">
    <property type="entry name" value="J_dom_sf"/>
</dbReference>
<dbReference type="PANTHER" id="PTHR24074">
    <property type="entry name" value="CO-CHAPERONE PROTEIN DJLA"/>
    <property type="match status" value="1"/>
</dbReference>
<dbReference type="Pfam" id="PF00226">
    <property type="entry name" value="DnaJ"/>
    <property type="match status" value="1"/>
</dbReference>
<dbReference type="PRINTS" id="PR00625">
    <property type="entry name" value="JDOMAIN"/>
</dbReference>
<dbReference type="SMART" id="SM00271">
    <property type="entry name" value="DnaJ"/>
    <property type="match status" value="1"/>
</dbReference>
<dbReference type="SUPFAM" id="SSF46565">
    <property type="entry name" value="Chaperone J-domain"/>
    <property type="match status" value="1"/>
</dbReference>
<dbReference type="PROSITE" id="PS00636">
    <property type="entry name" value="DNAJ_1"/>
    <property type="match status" value="1"/>
</dbReference>
<dbReference type="PROSITE" id="PS50076">
    <property type="entry name" value="DNAJ_2"/>
    <property type="match status" value="1"/>
</dbReference>